<sequence length="624" mass="69206">MIAYDKSYDVVVVGGGHAGCEAALAAARMGCCTLLLSINLDAIALMSCNPAIGGLAKGHLVKEIDALGGEMAKNIDATGIQFRILNTKKGPAVRASRAQADKQQYRLRMKRILEHQDKLDLKQAEVTSLLVEDGNVVGVDTKAGVRYLGKTIILTTGTFMRGLIHIGLTHYPGGRAGDLPSVGLSVSLEECGFKVGRLKTGTPARLDGRTIDFSRLEPQYGDNPPIPFSFSTDKITQSQVPCHIAYTNERSHDIIRSGLDRSPLYSGIIEGVGPRYCPSIEDKVVRFPEKDRHQTFIEPEGVDTVEVYPSGLSTSLPIDVQWAFYRSIYGLERVEIMRPAYAIEYDYVDPIQLHASLETKVVGNLYHAGQINGTSGYEEAAAQGLIAGINAALRVQGKEPLILGRNDAYIGVMIDDLVTLGSKEPYRMFTSRAEYRLLLREDNADLRLCEKGYAIGLVREEEYRRFHAKKNMIEEELQRLRQEKLLPSEADDVFMEEFGLTGMQNAMTYEQLLRRPDIDSRELARIDKHIMEIPAAVREQVEIQIKYQGYIDRQLEQVERARKLESAKIPGDLEYAGLPGLSAEVREKLQQFRPDTLGQASRIPGVTPAAITILSIALKARNGR</sequence>
<evidence type="ECO:0000255" key="1">
    <source>
        <dbReference type="HAMAP-Rule" id="MF_00129"/>
    </source>
</evidence>
<protein>
    <recommendedName>
        <fullName evidence="1">tRNA uridine 5-carboxymethylaminomethyl modification enzyme MnmG</fullName>
    </recommendedName>
    <alternativeName>
        <fullName evidence="1">Glucose-inhibited division protein A</fullName>
    </alternativeName>
</protein>
<accession>A5G9V2</accession>
<reference key="1">
    <citation type="submission" date="2007-05" db="EMBL/GenBank/DDBJ databases">
        <title>Complete sequence of Geobacter uraniireducens Rf4.</title>
        <authorList>
            <consortium name="US DOE Joint Genome Institute"/>
            <person name="Copeland A."/>
            <person name="Lucas S."/>
            <person name="Lapidus A."/>
            <person name="Barry K."/>
            <person name="Detter J.C."/>
            <person name="Glavina del Rio T."/>
            <person name="Hammon N."/>
            <person name="Israni S."/>
            <person name="Dalin E."/>
            <person name="Tice H."/>
            <person name="Pitluck S."/>
            <person name="Chertkov O."/>
            <person name="Brettin T."/>
            <person name="Bruce D."/>
            <person name="Han C."/>
            <person name="Schmutz J."/>
            <person name="Larimer F."/>
            <person name="Land M."/>
            <person name="Hauser L."/>
            <person name="Kyrpides N."/>
            <person name="Mikhailova N."/>
            <person name="Shelobolina E."/>
            <person name="Aklujkar M."/>
            <person name="Lovley D."/>
            <person name="Richardson P."/>
        </authorList>
    </citation>
    <scope>NUCLEOTIDE SEQUENCE [LARGE SCALE GENOMIC DNA]</scope>
    <source>
        <strain>ATCC BAA-1134 / JCM 13001 / Rf4</strain>
    </source>
</reference>
<proteinExistence type="inferred from homology"/>
<comment type="function">
    <text evidence="1">NAD-binding protein involved in the addition of a carboxymethylaminomethyl (cmnm) group at the wobble position (U34) of certain tRNAs, forming tRNA-cmnm(5)s(2)U34.</text>
</comment>
<comment type="cofactor">
    <cofactor evidence="1">
        <name>FAD</name>
        <dbReference type="ChEBI" id="CHEBI:57692"/>
    </cofactor>
</comment>
<comment type="subunit">
    <text evidence="1">Homodimer. Heterotetramer of two MnmE and two MnmG subunits.</text>
</comment>
<comment type="subcellular location">
    <subcellularLocation>
        <location evidence="1">Cytoplasm</location>
    </subcellularLocation>
</comment>
<comment type="similarity">
    <text evidence="1">Belongs to the MnmG family.</text>
</comment>
<keyword id="KW-0963">Cytoplasm</keyword>
<keyword id="KW-0274">FAD</keyword>
<keyword id="KW-0285">Flavoprotein</keyword>
<keyword id="KW-0520">NAD</keyword>
<keyword id="KW-1185">Reference proteome</keyword>
<keyword id="KW-0819">tRNA processing</keyword>
<organism>
    <name type="scientific">Geotalea uraniireducens (strain Rf4)</name>
    <name type="common">Geobacter uraniireducens</name>
    <dbReference type="NCBI Taxonomy" id="351605"/>
    <lineage>
        <taxon>Bacteria</taxon>
        <taxon>Pseudomonadati</taxon>
        <taxon>Thermodesulfobacteriota</taxon>
        <taxon>Desulfuromonadia</taxon>
        <taxon>Geobacterales</taxon>
        <taxon>Geobacteraceae</taxon>
        <taxon>Geotalea</taxon>
    </lineage>
</organism>
<gene>
    <name evidence="1" type="primary">mnmG</name>
    <name evidence="1" type="synonym">gidA</name>
    <name type="ordered locus">Gura_4427</name>
</gene>
<dbReference type="EMBL" id="CP000698">
    <property type="protein sequence ID" value="ABQ28570.1"/>
    <property type="molecule type" value="Genomic_DNA"/>
</dbReference>
<dbReference type="RefSeq" id="WP_011941196.1">
    <property type="nucleotide sequence ID" value="NC_009483.1"/>
</dbReference>
<dbReference type="SMR" id="A5G9V2"/>
<dbReference type="STRING" id="351605.Gura_4427"/>
<dbReference type="KEGG" id="gur:Gura_4427"/>
<dbReference type="HOGENOM" id="CLU_007831_2_2_7"/>
<dbReference type="OrthoDB" id="9815560at2"/>
<dbReference type="Proteomes" id="UP000006695">
    <property type="component" value="Chromosome"/>
</dbReference>
<dbReference type="GO" id="GO:0005829">
    <property type="term" value="C:cytosol"/>
    <property type="evidence" value="ECO:0007669"/>
    <property type="project" value="TreeGrafter"/>
</dbReference>
<dbReference type="GO" id="GO:0050660">
    <property type="term" value="F:flavin adenine dinucleotide binding"/>
    <property type="evidence" value="ECO:0007669"/>
    <property type="project" value="UniProtKB-UniRule"/>
</dbReference>
<dbReference type="GO" id="GO:0030488">
    <property type="term" value="P:tRNA methylation"/>
    <property type="evidence" value="ECO:0007669"/>
    <property type="project" value="TreeGrafter"/>
</dbReference>
<dbReference type="GO" id="GO:0002098">
    <property type="term" value="P:tRNA wobble uridine modification"/>
    <property type="evidence" value="ECO:0007669"/>
    <property type="project" value="InterPro"/>
</dbReference>
<dbReference type="FunFam" id="1.10.10.1800:FF:000001">
    <property type="entry name" value="tRNA uridine 5-carboxymethylaminomethyl modification enzyme MnmG"/>
    <property type="match status" value="1"/>
</dbReference>
<dbReference type="FunFam" id="1.10.150.570:FF:000001">
    <property type="entry name" value="tRNA uridine 5-carboxymethylaminomethyl modification enzyme MnmG"/>
    <property type="match status" value="1"/>
</dbReference>
<dbReference type="FunFam" id="3.50.50.60:FF:000002">
    <property type="entry name" value="tRNA uridine 5-carboxymethylaminomethyl modification enzyme MnmG"/>
    <property type="match status" value="1"/>
</dbReference>
<dbReference type="FunFam" id="3.50.50.60:FF:000010">
    <property type="entry name" value="tRNA uridine 5-carboxymethylaminomethyl modification enzyme MnmG"/>
    <property type="match status" value="1"/>
</dbReference>
<dbReference type="Gene3D" id="3.50.50.60">
    <property type="entry name" value="FAD/NAD(P)-binding domain"/>
    <property type="match status" value="2"/>
</dbReference>
<dbReference type="Gene3D" id="1.10.150.570">
    <property type="entry name" value="GidA associated domain, C-terminal subdomain"/>
    <property type="match status" value="1"/>
</dbReference>
<dbReference type="Gene3D" id="1.10.10.1800">
    <property type="entry name" value="tRNA uridine 5-carboxymethylaminomethyl modification enzyme MnmG/GidA"/>
    <property type="match status" value="1"/>
</dbReference>
<dbReference type="HAMAP" id="MF_00129">
    <property type="entry name" value="MnmG_GidA"/>
    <property type="match status" value="1"/>
</dbReference>
<dbReference type="InterPro" id="IPR036188">
    <property type="entry name" value="FAD/NAD-bd_sf"/>
</dbReference>
<dbReference type="InterPro" id="IPR049312">
    <property type="entry name" value="GIDA_C_N"/>
</dbReference>
<dbReference type="InterPro" id="IPR004416">
    <property type="entry name" value="MnmG"/>
</dbReference>
<dbReference type="InterPro" id="IPR002218">
    <property type="entry name" value="MnmG-rel"/>
</dbReference>
<dbReference type="InterPro" id="IPR020595">
    <property type="entry name" value="MnmG-rel_CS"/>
</dbReference>
<dbReference type="InterPro" id="IPR026904">
    <property type="entry name" value="MnmG_C"/>
</dbReference>
<dbReference type="InterPro" id="IPR047001">
    <property type="entry name" value="MnmG_C_subdom"/>
</dbReference>
<dbReference type="InterPro" id="IPR044920">
    <property type="entry name" value="MnmG_C_subdom_sf"/>
</dbReference>
<dbReference type="InterPro" id="IPR040131">
    <property type="entry name" value="MnmG_N"/>
</dbReference>
<dbReference type="NCBIfam" id="TIGR00136">
    <property type="entry name" value="mnmG_gidA"/>
    <property type="match status" value="1"/>
</dbReference>
<dbReference type="PANTHER" id="PTHR11806">
    <property type="entry name" value="GLUCOSE INHIBITED DIVISION PROTEIN A"/>
    <property type="match status" value="1"/>
</dbReference>
<dbReference type="PANTHER" id="PTHR11806:SF0">
    <property type="entry name" value="PROTEIN MTO1 HOMOLOG, MITOCHONDRIAL"/>
    <property type="match status" value="1"/>
</dbReference>
<dbReference type="Pfam" id="PF01134">
    <property type="entry name" value="GIDA"/>
    <property type="match status" value="1"/>
</dbReference>
<dbReference type="Pfam" id="PF21680">
    <property type="entry name" value="GIDA_C_1st"/>
    <property type="match status" value="1"/>
</dbReference>
<dbReference type="Pfam" id="PF13932">
    <property type="entry name" value="SAM_GIDA_C"/>
    <property type="match status" value="1"/>
</dbReference>
<dbReference type="PRINTS" id="PR00368">
    <property type="entry name" value="FADPNR"/>
</dbReference>
<dbReference type="PRINTS" id="PR00411">
    <property type="entry name" value="PNDRDTASEI"/>
</dbReference>
<dbReference type="SMART" id="SM01228">
    <property type="entry name" value="GIDA_assoc_3"/>
    <property type="match status" value="1"/>
</dbReference>
<dbReference type="SUPFAM" id="SSF51905">
    <property type="entry name" value="FAD/NAD(P)-binding domain"/>
    <property type="match status" value="1"/>
</dbReference>
<dbReference type="PROSITE" id="PS01280">
    <property type="entry name" value="GIDA_1"/>
    <property type="match status" value="1"/>
</dbReference>
<dbReference type="PROSITE" id="PS01281">
    <property type="entry name" value="GIDA_2"/>
    <property type="match status" value="1"/>
</dbReference>
<name>MNMG_GEOUR</name>
<feature type="chain" id="PRO_0000345274" description="tRNA uridine 5-carboxymethylaminomethyl modification enzyme MnmG">
    <location>
        <begin position="1"/>
        <end position="624"/>
    </location>
</feature>
<feature type="binding site" evidence="1">
    <location>
        <begin position="14"/>
        <end position="19"/>
    </location>
    <ligand>
        <name>FAD</name>
        <dbReference type="ChEBI" id="CHEBI:57692"/>
    </ligand>
</feature>
<feature type="binding site" evidence="1">
    <location>
        <position position="126"/>
    </location>
    <ligand>
        <name>FAD</name>
        <dbReference type="ChEBI" id="CHEBI:57692"/>
    </ligand>
</feature>
<feature type="binding site" evidence="1">
    <location>
        <position position="181"/>
    </location>
    <ligand>
        <name>FAD</name>
        <dbReference type="ChEBI" id="CHEBI:57692"/>
    </ligand>
</feature>
<feature type="binding site" evidence="1">
    <location>
        <begin position="273"/>
        <end position="287"/>
    </location>
    <ligand>
        <name>NAD(+)</name>
        <dbReference type="ChEBI" id="CHEBI:57540"/>
    </ligand>
</feature>
<feature type="binding site" evidence="1">
    <location>
        <position position="370"/>
    </location>
    <ligand>
        <name>FAD</name>
        <dbReference type="ChEBI" id="CHEBI:57692"/>
    </ligand>
</feature>